<feature type="chain" id="PRO_0000369365" description="Molybdenum cofactor sulfurase 2">
    <location>
        <begin position="1"/>
        <end position="762"/>
    </location>
</feature>
<feature type="domain" description="MOSC" evidence="1">
    <location>
        <begin position="590"/>
        <end position="738"/>
    </location>
</feature>
<feature type="active site" evidence="1">
    <location>
        <position position="400"/>
    </location>
</feature>
<feature type="modified residue" description="N6-(pyridoxal phosphate)lysine" evidence="1">
    <location>
        <position position="234"/>
    </location>
</feature>
<dbReference type="EC" id="2.8.1.9" evidence="1"/>
<dbReference type="EMBL" id="CH477791">
    <property type="protein sequence ID" value="EAT36182.1"/>
    <property type="molecule type" value="Genomic_DNA"/>
</dbReference>
<dbReference type="RefSeq" id="XP_001661863.1">
    <property type="nucleotide sequence ID" value="XM_001661813.1"/>
</dbReference>
<dbReference type="SMR" id="Q16P87"/>
<dbReference type="FunCoup" id="Q16P87">
    <property type="interactions" value="148"/>
</dbReference>
<dbReference type="STRING" id="7159.Q16P87"/>
<dbReference type="PaxDb" id="7159-AAEL011727-PA"/>
<dbReference type="GeneID" id="5575262"/>
<dbReference type="KEGG" id="aag:5575262"/>
<dbReference type="VEuPathDB" id="VectorBase:AAEL011727"/>
<dbReference type="eggNOG" id="KOG2142">
    <property type="taxonomic scope" value="Eukaryota"/>
</dbReference>
<dbReference type="HOGENOM" id="CLU_010913_0_1_1"/>
<dbReference type="InParanoid" id="Q16P87"/>
<dbReference type="OMA" id="THPFMED"/>
<dbReference type="OrthoDB" id="420046at2759"/>
<dbReference type="PhylomeDB" id="Q16P87"/>
<dbReference type="Proteomes" id="UP000008820">
    <property type="component" value="Unassembled WGS sequence"/>
</dbReference>
<dbReference type="Proteomes" id="UP000682892">
    <property type="component" value="Unassembled WGS sequence"/>
</dbReference>
<dbReference type="GO" id="GO:0016829">
    <property type="term" value="F:lyase activity"/>
    <property type="evidence" value="ECO:0007669"/>
    <property type="project" value="UniProtKB-UniRule"/>
</dbReference>
<dbReference type="GO" id="GO:0008265">
    <property type="term" value="F:molybdenum cofactor sulfurtransferase activity"/>
    <property type="evidence" value="ECO:0000250"/>
    <property type="project" value="UniProtKB"/>
</dbReference>
<dbReference type="GO" id="GO:0030151">
    <property type="term" value="F:molybdenum ion binding"/>
    <property type="evidence" value="ECO:0007669"/>
    <property type="project" value="UniProtKB-UniRule"/>
</dbReference>
<dbReference type="GO" id="GO:0030170">
    <property type="term" value="F:pyridoxal phosphate binding"/>
    <property type="evidence" value="ECO:0007669"/>
    <property type="project" value="UniProtKB-UniRule"/>
</dbReference>
<dbReference type="GO" id="GO:0006777">
    <property type="term" value="P:Mo-molybdopterin cofactor biosynthetic process"/>
    <property type="evidence" value="ECO:0007669"/>
    <property type="project" value="UniProtKB-UniRule"/>
</dbReference>
<dbReference type="GO" id="GO:0043545">
    <property type="term" value="P:molybdopterin cofactor metabolic process"/>
    <property type="evidence" value="ECO:0000250"/>
    <property type="project" value="UniProtKB"/>
</dbReference>
<dbReference type="FunFam" id="3.40.640.10:FF:000119">
    <property type="entry name" value="Molybdenum cofactor sulfurase"/>
    <property type="match status" value="1"/>
</dbReference>
<dbReference type="FunFam" id="3.90.1150.10:FF:000079">
    <property type="entry name" value="Molybdenum cofactor sulfurase"/>
    <property type="match status" value="1"/>
</dbReference>
<dbReference type="Gene3D" id="3.90.1150.10">
    <property type="entry name" value="Aspartate Aminotransferase, domain 1"/>
    <property type="match status" value="1"/>
</dbReference>
<dbReference type="Gene3D" id="3.40.640.10">
    <property type="entry name" value="Type I PLP-dependent aspartate aminotransferase-like (Major domain)"/>
    <property type="match status" value="1"/>
</dbReference>
<dbReference type="HAMAP" id="MF_03050">
    <property type="entry name" value="MOCOS"/>
    <property type="match status" value="1"/>
</dbReference>
<dbReference type="InterPro" id="IPR000192">
    <property type="entry name" value="Aminotrans_V_dom"/>
</dbReference>
<dbReference type="InterPro" id="IPR005302">
    <property type="entry name" value="MoCF_Sase_C"/>
</dbReference>
<dbReference type="InterPro" id="IPR028886">
    <property type="entry name" value="MoCo_sulfurase"/>
</dbReference>
<dbReference type="InterPro" id="IPR005303">
    <property type="entry name" value="MOCOS_middle"/>
</dbReference>
<dbReference type="InterPro" id="IPR015424">
    <property type="entry name" value="PyrdxlP-dep_Trfase"/>
</dbReference>
<dbReference type="InterPro" id="IPR015421">
    <property type="entry name" value="PyrdxlP-dep_Trfase_major"/>
</dbReference>
<dbReference type="InterPro" id="IPR015422">
    <property type="entry name" value="PyrdxlP-dep_Trfase_small"/>
</dbReference>
<dbReference type="PANTHER" id="PTHR14237:SF80">
    <property type="entry name" value="MOLYBDENUM COFACTOR SULFURASE"/>
    <property type="match status" value="1"/>
</dbReference>
<dbReference type="PANTHER" id="PTHR14237">
    <property type="entry name" value="MOLYBDOPTERIN COFACTOR SULFURASE MOSC"/>
    <property type="match status" value="1"/>
</dbReference>
<dbReference type="Pfam" id="PF00266">
    <property type="entry name" value="Aminotran_5"/>
    <property type="match status" value="1"/>
</dbReference>
<dbReference type="Pfam" id="PF03473">
    <property type="entry name" value="MOSC"/>
    <property type="match status" value="1"/>
</dbReference>
<dbReference type="Pfam" id="PF03476">
    <property type="entry name" value="MOSC_N"/>
    <property type="match status" value="1"/>
</dbReference>
<dbReference type="SUPFAM" id="SSF141673">
    <property type="entry name" value="MOSC N-terminal domain-like"/>
    <property type="match status" value="1"/>
</dbReference>
<dbReference type="SUPFAM" id="SSF53383">
    <property type="entry name" value="PLP-dependent transferases"/>
    <property type="match status" value="1"/>
</dbReference>
<dbReference type="PROSITE" id="PS51340">
    <property type="entry name" value="MOSC"/>
    <property type="match status" value="1"/>
</dbReference>
<sequence>MEFEQEYTAEEALNIEKEFTRLKGKHYMDHAGTTLYAESQIRAVHDMLAQNLFCNPHSSPLTGKLLQQVRHRLLRFFNTSPSDYSLVFTSGATASLKLVAESFRFRPPDEPESSPDEGAFVYLRDNHTSVLGMRSVVGTERIDPLEPEELLRHLKVSARCSGGTKPSLLVFPAQNNFNAAKYPLDLVEEIQQNGLSGYDDERFYVCLDAASYVSTNFLDLGRYRPDFVCMSFYKIFGYPTGLGALLIRNGSEDVLDKKYYGGGTIKIMLSGQNLHLKHDDLVTRFEDGTQPFLSIISLLEGMNTIQRLIPAANGYRPMERISKHVFSLAKYCYRKLGTLQHANGKKAILFYSDTRYETRDRQGGIVTFNVLKDDGSHLGFSEFAKFAGQHQIYVRTGCFCNAGSCQKHLGLTDEDILMFYEMGKVCGDDTDMIEGRPTGTVRVSFGYMNKKEDVNRLVDMINDCFVSKAVSNVAMVSPIRNVIKNEGIALKAIYLYPIRSCGGYRITAAWPLTERGLKYDREFTIVDSNGNPLMRNKHAEMSTIHPKIDPSLNFLILTHPFMEDLILKIRKLPTEFNDGESIDLGDAAAAWISKALRMPKLRLLRTSATDRKPPHKLLMINWDAMKTLSDDEGVESDATMSWLVDHFRGSLIVEGKAEEDLQGWKEVKIGKKRFKVQANCSRCPMIHVDQSGEAIPADSLKAIANVFTKKIPLGVHLTAVDEGFPEGVLECGSILEPVRQSDSPKAHIIKDSVSTRYNFLVK</sequence>
<comment type="function">
    <text evidence="1">Sulfurates the molybdenum cofactor. Sulfation of molybdenum is essential for xanthine dehydrogenase (XDH) and aldehyde oxidase (ADO) enzymes in which molybdenum cofactor is liganded by 1 oxygen and 1 sulfur atom in active form.</text>
</comment>
<comment type="catalytic activity">
    <reaction evidence="1">
        <text>Mo-molybdopterin + L-cysteine + AH2 = thio-Mo-molybdopterin + L-alanine + A + H2O</text>
        <dbReference type="Rhea" id="RHEA:42636"/>
        <dbReference type="ChEBI" id="CHEBI:13193"/>
        <dbReference type="ChEBI" id="CHEBI:15377"/>
        <dbReference type="ChEBI" id="CHEBI:17499"/>
        <dbReference type="ChEBI" id="CHEBI:35235"/>
        <dbReference type="ChEBI" id="CHEBI:57972"/>
        <dbReference type="ChEBI" id="CHEBI:71302"/>
        <dbReference type="ChEBI" id="CHEBI:82685"/>
        <dbReference type="EC" id="2.8.1.9"/>
    </reaction>
</comment>
<comment type="cofactor">
    <cofactor evidence="1">
        <name>pyridoxal 5'-phosphate</name>
        <dbReference type="ChEBI" id="CHEBI:597326"/>
    </cofactor>
</comment>
<comment type="similarity">
    <text evidence="1">Belongs to the class-V pyridoxal-phosphate-dependent aminotransferase family. MOCOS subfamily.</text>
</comment>
<protein>
    <recommendedName>
        <fullName evidence="1">Molybdenum cofactor sulfurase 2</fullName>
        <shortName evidence="1">MCS 2</shortName>
        <shortName evidence="1">MOS 2</shortName>
        <shortName evidence="1">MoCo sulfurase 2</shortName>
        <ecNumber evidence="1">2.8.1.9</ecNumber>
    </recommendedName>
    <alternativeName>
        <fullName evidence="1">Molybdenum cofactor sulfurtransferase 2</fullName>
    </alternativeName>
    <alternativeName>
        <fullName evidence="1">Protein maroon-like 2</fullName>
        <shortName evidence="1">Ma-l 2</shortName>
    </alternativeName>
</protein>
<proteinExistence type="inferred from homology"/>
<gene>
    <name evidence="1" type="primary">mal2</name>
    <name type="ORF">AAEL011727</name>
</gene>
<keyword id="KW-0501">Molybdenum cofactor biosynthesis</keyword>
<keyword id="KW-0663">Pyridoxal phosphate</keyword>
<keyword id="KW-1185">Reference proteome</keyword>
<keyword id="KW-0808">Transferase</keyword>
<reference key="1">
    <citation type="journal article" date="2007" name="Science">
        <title>Genome sequence of Aedes aegypti, a major arbovirus vector.</title>
        <authorList>
            <person name="Nene V."/>
            <person name="Wortman J.R."/>
            <person name="Lawson D."/>
            <person name="Haas B.J."/>
            <person name="Kodira C.D."/>
            <person name="Tu Z.J."/>
            <person name="Loftus B.J."/>
            <person name="Xi Z."/>
            <person name="Megy K."/>
            <person name="Grabherr M."/>
            <person name="Ren Q."/>
            <person name="Zdobnov E.M."/>
            <person name="Lobo N.F."/>
            <person name="Campbell K.S."/>
            <person name="Brown S.E."/>
            <person name="Bonaldo M.F."/>
            <person name="Zhu J."/>
            <person name="Sinkins S.P."/>
            <person name="Hogenkamp D.G."/>
            <person name="Amedeo P."/>
            <person name="Arensburger P."/>
            <person name="Atkinson P.W."/>
            <person name="Bidwell S.L."/>
            <person name="Biedler J."/>
            <person name="Birney E."/>
            <person name="Bruggner R.V."/>
            <person name="Costas J."/>
            <person name="Coy M.R."/>
            <person name="Crabtree J."/>
            <person name="Crawford M."/>
            <person name="DeBruyn B."/>
            <person name="DeCaprio D."/>
            <person name="Eiglmeier K."/>
            <person name="Eisenstadt E."/>
            <person name="El-Dorry H."/>
            <person name="Gelbart W.M."/>
            <person name="Gomes S.L."/>
            <person name="Hammond M."/>
            <person name="Hannick L.I."/>
            <person name="Hogan J.R."/>
            <person name="Holmes M.H."/>
            <person name="Jaffe D."/>
            <person name="Johnston S.J."/>
            <person name="Kennedy R.C."/>
            <person name="Koo H."/>
            <person name="Kravitz S."/>
            <person name="Kriventseva E.V."/>
            <person name="Kulp D."/>
            <person name="Labutti K."/>
            <person name="Lee E."/>
            <person name="Li S."/>
            <person name="Lovin D.D."/>
            <person name="Mao C."/>
            <person name="Mauceli E."/>
            <person name="Menck C.F."/>
            <person name="Miller J.R."/>
            <person name="Montgomery P."/>
            <person name="Mori A."/>
            <person name="Nascimento A.L."/>
            <person name="Naveira H.F."/>
            <person name="Nusbaum C."/>
            <person name="O'Leary S.B."/>
            <person name="Orvis J."/>
            <person name="Pertea M."/>
            <person name="Quesneville H."/>
            <person name="Reidenbach K.R."/>
            <person name="Rogers Y.-H.C."/>
            <person name="Roth C.W."/>
            <person name="Schneider J.R."/>
            <person name="Schatz M."/>
            <person name="Shumway M."/>
            <person name="Stanke M."/>
            <person name="Stinson E.O."/>
            <person name="Tubio J.M.C."/>
            <person name="Vanzee J.P."/>
            <person name="Verjovski-Almeida S."/>
            <person name="Werner D."/>
            <person name="White O.R."/>
            <person name="Wyder S."/>
            <person name="Zeng Q."/>
            <person name="Zhao Q."/>
            <person name="Zhao Y."/>
            <person name="Hill C.A."/>
            <person name="Raikhel A.S."/>
            <person name="Soares M.B."/>
            <person name="Knudson D.L."/>
            <person name="Lee N.H."/>
            <person name="Galagan J."/>
            <person name="Salzberg S.L."/>
            <person name="Paulsen I.T."/>
            <person name="Dimopoulos G."/>
            <person name="Collins F.H."/>
            <person name="Bruce B."/>
            <person name="Fraser-Liggett C.M."/>
            <person name="Severson D.W."/>
        </authorList>
    </citation>
    <scope>NUCLEOTIDE SEQUENCE [LARGE SCALE GENOMIC DNA]</scope>
    <source>
        <strain>LVPib12</strain>
    </source>
</reference>
<evidence type="ECO:0000255" key="1">
    <source>
        <dbReference type="HAMAP-Rule" id="MF_03050"/>
    </source>
</evidence>
<accession>Q16P87</accession>
<organism>
    <name type="scientific">Aedes aegypti</name>
    <name type="common">Yellowfever mosquito</name>
    <name type="synonym">Culex aegypti</name>
    <dbReference type="NCBI Taxonomy" id="7159"/>
    <lineage>
        <taxon>Eukaryota</taxon>
        <taxon>Metazoa</taxon>
        <taxon>Ecdysozoa</taxon>
        <taxon>Arthropoda</taxon>
        <taxon>Hexapoda</taxon>
        <taxon>Insecta</taxon>
        <taxon>Pterygota</taxon>
        <taxon>Neoptera</taxon>
        <taxon>Endopterygota</taxon>
        <taxon>Diptera</taxon>
        <taxon>Nematocera</taxon>
        <taxon>Culicoidea</taxon>
        <taxon>Culicidae</taxon>
        <taxon>Culicinae</taxon>
        <taxon>Aedini</taxon>
        <taxon>Aedes</taxon>
        <taxon>Stegomyia</taxon>
    </lineage>
</organism>
<name>MOCO2_AEDAE</name>